<organism>
    <name type="scientific">Prochlorococcus marinus (strain MIT 9313)</name>
    <dbReference type="NCBI Taxonomy" id="74547"/>
    <lineage>
        <taxon>Bacteria</taxon>
        <taxon>Bacillati</taxon>
        <taxon>Cyanobacteriota</taxon>
        <taxon>Cyanophyceae</taxon>
        <taxon>Synechococcales</taxon>
        <taxon>Prochlorococcaceae</taxon>
        <taxon>Prochlorococcus</taxon>
    </lineage>
</organism>
<proteinExistence type="inferred from homology"/>
<comment type="function">
    <text evidence="1">May play a role in DNA repair. It seems to be involved in an RecBC-independent recombinational process of DNA repair. It may act with RecF and RecO.</text>
</comment>
<comment type="similarity">
    <text evidence="1">Belongs to the RecR family.</text>
</comment>
<sequence length="189" mass="20991">MIDQFERLPGIGPRTAQRLALHLLRQPEDQIRAFADALLAARSQVGQCQTCFHLSAEPLCDICRDGKRCDQLLCVVADSRDLLALERTREYKGRYHVLGGLISPMDGIGPDMLQIPSLIQRVDRDGISEVILALTPSVEGDTTSLYLARLLKPFTQVSRIAYGLPVGSELEYADEVTLTRALEGRRAMQ</sequence>
<gene>
    <name evidence="1" type="primary">recR</name>
    <name type="ordered locus">PMT_1077</name>
</gene>
<accession>Q7V6R9</accession>
<dbReference type="EMBL" id="BX548175">
    <property type="protein sequence ID" value="CAE21252.1"/>
    <property type="molecule type" value="Genomic_DNA"/>
</dbReference>
<dbReference type="SMR" id="Q7V6R9"/>
<dbReference type="KEGG" id="pmt:PMT_1077"/>
<dbReference type="eggNOG" id="COG0353">
    <property type="taxonomic scope" value="Bacteria"/>
</dbReference>
<dbReference type="HOGENOM" id="CLU_060739_1_0_3"/>
<dbReference type="Proteomes" id="UP000001423">
    <property type="component" value="Chromosome"/>
</dbReference>
<dbReference type="GO" id="GO:0003677">
    <property type="term" value="F:DNA binding"/>
    <property type="evidence" value="ECO:0007669"/>
    <property type="project" value="UniProtKB-UniRule"/>
</dbReference>
<dbReference type="GO" id="GO:0008270">
    <property type="term" value="F:zinc ion binding"/>
    <property type="evidence" value="ECO:0007669"/>
    <property type="project" value="UniProtKB-KW"/>
</dbReference>
<dbReference type="GO" id="GO:0006310">
    <property type="term" value="P:DNA recombination"/>
    <property type="evidence" value="ECO:0007669"/>
    <property type="project" value="UniProtKB-UniRule"/>
</dbReference>
<dbReference type="GO" id="GO:0006281">
    <property type="term" value="P:DNA repair"/>
    <property type="evidence" value="ECO:0007669"/>
    <property type="project" value="UniProtKB-UniRule"/>
</dbReference>
<dbReference type="CDD" id="cd01025">
    <property type="entry name" value="TOPRIM_recR"/>
    <property type="match status" value="1"/>
</dbReference>
<dbReference type="Gene3D" id="3.40.1360.10">
    <property type="match status" value="1"/>
</dbReference>
<dbReference type="Gene3D" id="6.10.250.240">
    <property type="match status" value="1"/>
</dbReference>
<dbReference type="Gene3D" id="1.10.8.420">
    <property type="entry name" value="RecR Domain 1"/>
    <property type="match status" value="1"/>
</dbReference>
<dbReference type="HAMAP" id="MF_00017">
    <property type="entry name" value="RecR"/>
    <property type="match status" value="1"/>
</dbReference>
<dbReference type="InterPro" id="IPR000093">
    <property type="entry name" value="DNA_Rcmb_RecR"/>
</dbReference>
<dbReference type="InterPro" id="IPR023627">
    <property type="entry name" value="Rcmb_RecR"/>
</dbReference>
<dbReference type="InterPro" id="IPR015967">
    <property type="entry name" value="Rcmb_RecR_Znf"/>
</dbReference>
<dbReference type="InterPro" id="IPR006171">
    <property type="entry name" value="TOPRIM_dom"/>
</dbReference>
<dbReference type="InterPro" id="IPR034137">
    <property type="entry name" value="TOPRIM_RecR"/>
</dbReference>
<dbReference type="NCBIfam" id="TIGR00615">
    <property type="entry name" value="recR"/>
    <property type="match status" value="1"/>
</dbReference>
<dbReference type="PANTHER" id="PTHR30446">
    <property type="entry name" value="RECOMBINATION PROTEIN RECR"/>
    <property type="match status" value="1"/>
</dbReference>
<dbReference type="PANTHER" id="PTHR30446:SF0">
    <property type="entry name" value="RECOMBINATION PROTEIN RECR"/>
    <property type="match status" value="1"/>
</dbReference>
<dbReference type="Pfam" id="PF21175">
    <property type="entry name" value="RecR_C"/>
    <property type="match status" value="1"/>
</dbReference>
<dbReference type="Pfam" id="PF21176">
    <property type="entry name" value="RecR_HhH"/>
    <property type="match status" value="1"/>
</dbReference>
<dbReference type="Pfam" id="PF02132">
    <property type="entry name" value="RecR_ZnF"/>
    <property type="match status" value="1"/>
</dbReference>
<dbReference type="Pfam" id="PF13662">
    <property type="entry name" value="Toprim_4"/>
    <property type="match status" value="1"/>
</dbReference>
<dbReference type="SMART" id="SM00493">
    <property type="entry name" value="TOPRIM"/>
    <property type="match status" value="1"/>
</dbReference>
<dbReference type="SUPFAM" id="SSF111304">
    <property type="entry name" value="Recombination protein RecR"/>
    <property type="match status" value="1"/>
</dbReference>
<dbReference type="PROSITE" id="PS50880">
    <property type="entry name" value="TOPRIM"/>
    <property type="match status" value="1"/>
</dbReference>
<evidence type="ECO:0000255" key="1">
    <source>
        <dbReference type="HAMAP-Rule" id="MF_00017"/>
    </source>
</evidence>
<keyword id="KW-0227">DNA damage</keyword>
<keyword id="KW-0233">DNA recombination</keyword>
<keyword id="KW-0234">DNA repair</keyword>
<keyword id="KW-0479">Metal-binding</keyword>
<keyword id="KW-1185">Reference proteome</keyword>
<keyword id="KW-0862">Zinc</keyword>
<keyword id="KW-0863">Zinc-finger</keyword>
<protein>
    <recommendedName>
        <fullName evidence="1">Recombination protein RecR</fullName>
    </recommendedName>
</protein>
<name>RECR_PROMM</name>
<feature type="chain" id="PRO_0000190364" description="Recombination protein RecR">
    <location>
        <begin position="1"/>
        <end position="189"/>
    </location>
</feature>
<feature type="domain" description="Toprim" evidence="1">
    <location>
        <begin position="71"/>
        <end position="165"/>
    </location>
</feature>
<feature type="zinc finger region" description="C4-type" evidence="1">
    <location>
        <begin position="48"/>
        <end position="63"/>
    </location>
</feature>
<reference key="1">
    <citation type="journal article" date="2003" name="Nature">
        <title>Genome divergence in two Prochlorococcus ecotypes reflects oceanic niche differentiation.</title>
        <authorList>
            <person name="Rocap G."/>
            <person name="Larimer F.W."/>
            <person name="Lamerdin J.E."/>
            <person name="Malfatti S."/>
            <person name="Chain P."/>
            <person name="Ahlgren N.A."/>
            <person name="Arellano A."/>
            <person name="Coleman M."/>
            <person name="Hauser L."/>
            <person name="Hess W.R."/>
            <person name="Johnson Z.I."/>
            <person name="Land M.L."/>
            <person name="Lindell D."/>
            <person name="Post A.F."/>
            <person name="Regala W."/>
            <person name="Shah M."/>
            <person name="Shaw S.L."/>
            <person name="Steglich C."/>
            <person name="Sullivan M.B."/>
            <person name="Ting C.S."/>
            <person name="Tolonen A."/>
            <person name="Webb E.A."/>
            <person name="Zinser E.R."/>
            <person name="Chisholm S.W."/>
        </authorList>
    </citation>
    <scope>NUCLEOTIDE SEQUENCE [LARGE SCALE GENOMIC DNA]</scope>
    <source>
        <strain>MIT 9313</strain>
    </source>
</reference>